<proteinExistence type="evidence at protein level"/>
<dbReference type="EMBL" id="AF497263">
    <property type="protein sequence ID" value="AAM28824.1"/>
    <property type="molecule type" value="mRNA"/>
</dbReference>
<dbReference type="EMBL" id="AF497264">
    <property type="protein sequence ID" value="AAM28825.1"/>
    <property type="molecule type" value="mRNA"/>
</dbReference>
<dbReference type="EMBL" id="AF534395">
    <property type="protein sequence ID" value="AAN05632.1"/>
    <property type="molecule type" value="mRNA"/>
</dbReference>
<dbReference type="EMBL" id="CH473954">
    <property type="protein sequence ID" value="EDL77074.1"/>
    <property type="molecule type" value="Genomic_DNA"/>
</dbReference>
<dbReference type="RefSeq" id="NP_640352.1">
    <property type="nucleotide sequence ID" value="NM_139259.2"/>
</dbReference>
<dbReference type="RefSeq" id="XP_006243983.1">
    <molecule id="Q8K5A9-2"/>
    <property type="nucleotide sequence ID" value="XM_006243921.4"/>
</dbReference>
<dbReference type="SMR" id="Q8K5A9"/>
<dbReference type="FunCoup" id="Q8K5A9">
    <property type="interactions" value="48"/>
</dbReference>
<dbReference type="IntAct" id="Q8K5A9">
    <property type="interactions" value="2"/>
</dbReference>
<dbReference type="MINT" id="Q8K5A9"/>
<dbReference type="STRING" id="10116.ENSRNOP00000028416"/>
<dbReference type="GlyCosmos" id="Q8K5A9">
    <property type="glycosylation" value="2 sites, No reported glycans"/>
</dbReference>
<dbReference type="GlyGen" id="Q8K5A9">
    <property type="glycosylation" value="2 sites"/>
</dbReference>
<dbReference type="iPTMnet" id="Q8K5A9"/>
<dbReference type="PhosphoSitePlus" id="Q8K5A9"/>
<dbReference type="PaxDb" id="10116-ENSRNOP00000028416"/>
<dbReference type="GeneID" id="246143"/>
<dbReference type="KEGG" id="rno:246143"/>
<dbReference type="UCSC" id="RGD:708524">
    <molecule id="Q8K5A9-1"/>
    <property type="organism name" value="rat"/>
</dbReference>
<dbReference type="AGR" id="RGD:708524"/>
<dbReference type="CTD" id="67169"/>
<dbReference type="RGD" id="708524">
    <property type="gene designation" value="Nradd"/>
</dbReference>
<dbReference type="VEuPathDB" id="HostDB:ENSRNOG00000020936"/>
<dbReference type="eggNOG" id="ENOG502QRGT">
    <property type="taxonomic scope" value="Eukaryota"/>
</dbReference>
<dbReference type="HOGENOM" id="CLU_1229566_0_0_1"/>
<dbReference type="InParanoid" id="Q8K5A9"/>
<dbReference type="OrthoDB" id="73075at9989"/>
<dbReference type="PhylomeDB" id="Q8K5A9"/>
<dbReference type="TreeFam" id="TF106466"/>
<dbReference type="PRO" id="PR:Q8K5A9"/>
<dbReference type="Proteomes" id="UP000002494">
    <property type="component" value="Chromosome 8"/>
</dbReference>
<dbReference type="Proteomes" id="UP000234681">
    <property type="component" value="Chromosome 8"/>
</dbReference>
<dbReference type="Bgee" id="ENSRNOG00000020936">
    <property type="expression patterns" value="Expressed in ovary and 19 other cell types or tissues"/>
</dbReference>
<dbReference type="GO" id="GO:0044298">
    <property type="term" value="C:cell body membrane"/>
    <property type="evidence" value="ECO:0000314"/>
    <property type="project" value="RGD"/>
</dbReference>
<dbReference type="GO" id="GO:0009986">
    <property type="term" value="C:cell surface"/>
    <property type="evidence" value="ECO:0000318"/>
    <property type="project" value="GO_Central"/>
</dbReference>
<dbReference type="GO" id="GO:0030027">
    <property type="term" value="C:lamellipodium"/>
    <property type="evidence" value="ECO:0000266"/>
    <property type="project" value="RGD"/>
</dbReference>
<dbReference type="GO" id="GO:0016020">
    <property type="term" value="C:membrane"/>
    <property type="evidence" value="ECO:0000266"/>
    <property type="project" value="RGD"/>
</dbReference>
<dbReference type="GO" id="GO:0032589">
    <property type="term" value="C:neuron projection membrane"/>
    <property type="evidence" value="ECO:0000314"/>
    <property type="project" value="RGD"/>
</dbReference>
<dbReference type="GO" id="GO:0005641">
    <property type="term" value="C:nuclear envelope lumen"/>
    <property type="evidence" value="ECO:0000266"/>
    <property type="project" value="RGD"/>
</dbReference>
<dbReference type="GO" id="GO:0005634">
    <property type="term" value="C:nucleus"/>
    <property type="evidence" value="ECO:0000266"/>
    <property type="project" value="RGD"/>
</dbReference>
<dbReference type="GO" id="GO:0005886">
    <property type="term" value="C:plasma membrane"/>
    <property type="evidence" value="ECO:0000318"/>
    <property type="project" value="GO_Central"/>
</dbReference>
<dbReference type="GO" id="GO:0015026">
    <property type="term" value="F:coreceptor activity"/>
    <property type="evidence" value="ECO:0000318"/>
    <property type="project" value="GO_Central"/>
</dbReference>
<dbReference type="GO" id="GO:0005035">
    <property type="term" value="F:death receptor activity"/>
    <property type="evidence" value="ECO:0000318"/>
    <property type="project" value="GO_Central"/>
</dbReference>
<dbReference type="GO" id="GO:0048406">
    <property type="term" value="F:nerve growth factor binding"/>
    <property type="evidence" value="ECO:0000318"/>
    <property type="project" value="GO_Central"/>
</dbReference>
<dbReference type="GO" id="GO:0005166">
    <property type="term" value="F:neurotrophin p75 receptor binding"/>
    <property type="evidence" value="ECO:0000353"/>
    <property type="project" value="RGD"/>
</dbReference>
<dbReference type="GO" id="GO:0006915">
    <property type="term" value="P:apoptotic process"/>
    <property type="evidence" value="ECO:0007669"/>
    <property type="project" value="UniProtKB-KW"/>
</dbReference>
<dbReference type="GO" id="GO:0001701">
    <property type="term" value="P:in utero embryonic development"/>
    <property type="evidence" value="ECO:0000270"/>
    <property type="project" value="RGD"/>
</dbReference>
<dbReference type="GO" id="GO:0007266">
    <property type="term" value="P:Rho protein signal transduction"/>
    <property type="evidence" value="ECO:0000318"/>
    <property type="project" value="GO_Central"/>
</dbReference>
<dbReference type="CDD" id="cd08311">
    <property type="entry name" value="Death_p75NR"/>
    <property type="match status" value="1"/>
</dbReference>
<dbReference type="FunFam" id="1.10.533.10:FF:000140">
    <property type="entry name" value="Death domain-containing membrane protein NRADD"/>
    <property type="match status" value="1"/>
</dbReference>
<dbReference type="Gene3D" id="6.10.250.1780">
    <property type="match status" value="1"/>
</dbReference>
<dbReference type="Gene3D" id="1.10.533.10">
    <property type="entry name" value="Death Domain, Fas"/>
    <property type="match status" value="1"/>
</dbReference>
<dbReference type="InterPro" id="IPR011029">
    <property type="entry name" value="DEATH-like_dom_sf"/>
</dbReference>
<dbReference type="InterPro" id="IPR000488">
    <property type="entry name" value="Death_dom"/>
</dbReference>
<dbReference type="InterPro" id="IPR052302">
    <property type="entry name" value="Neurotrophin_rcpt-DD"/>
</dbReference>
<dbReference type="InterPro" id="IPR041448">
    <property type="entry name" value="TNFR16_TM"/>
</dbReference>
<dbReference type="PANTHER" id="PTHR46605:SF1">
    <property type="entry name" value="DEATH DOMAIN-CONTAINING MEMBRANE PROTEIN NRADD"/>
    <property type="match status" value="1"/>
</dbReference>
<dbReference type="PANTHER" id="PTHR46605">
    <property type="entry name" value="TUMOR NECROSIS FACTOR RECEPTOR"/>
    <property type="match status" value="1"/>
</dbReference>
<dbReference type="Pfam" id="PF00531">
    <property type="entry name" value="Death"/>
    <property type="match status" value="1"/>
</dbReference>
<dbReference type="Pfam" id="PF18422">
    <property type="entry name" value="TNFR_16_TM"/>
    <property type="match status" value="1"/>
</dbReference>
<dbReference type="SMART" id="SM00005">
    <property type="entry name" value="DEATH"/>
    <property type="match status" value="1"/>
</dbReference>
<dbReference type="SUPFAM" id="SSF47986">
    <property type="entry name" value="DEATH domain"/>
    <property type="match status" value="1"/>
</dbReference>
<dbReference type="PROSITE" id="PS50017">
    <property type="entry name" value="DEATH_DOMAIN"/>
    <property type="match status" value="1"/>
</dbReference>
<protein>
    <recommendedName>
        <fullName>Death domain-containing membrane protein NRADD</fullName>
    </recommendedName>
    <alternativeName>
        <fullName>Neurotrophin receptor homolog-2</fullName>
        <shortName>NRH2</shortName>
    </alternativeName>
    <alternativeName>
        <fullName>Neurotrophin receptor-alike death domain protein</fullName>
    </alternativeName>
    <alternativeName>
        <fullName>P75-like apoptosis-inducing death domain protein</fullName>
        <shortName>PLAIDD</shortName>
    </alternativeName>
</protein>
<organism>
    <name type="scientific">Rattus norvegicus</name>
    <name type="common">Rat</name>
    <dbReference type="NCBI Taxonomy" id="10116"/>
    <lineage>
        <taxon>Eukaryota</taxon>
        <taxon>Metazoa</taxon>
        <taxon>Chordata</taxon>
        <taxon>Craniata</taxon>
        <taxon>Vertebrata</taxon>
        <taxon>Euteleostomi</taxon>
        <taxon>Mammalia</taxon>
        <taxon>Eutheria</taxon>
        <taxon>Euarchontoglires</taxon>
        <taxon>Glires</taxon>
        <taxon>Rodentia</taxon>
        <taxon>Myomorpha</taxon>
        <taxon>Muroidea</taxon>
        <taxon>Muridae</taxon>
        <taxon>Murinae</taxon>
        <taxon>Rattus</taxon>
    </lineage>
</organism>
<accession>Q8K5A9</accession>
<accession>G3V8U7</accession>
<accession>Q8K5A8</accession>
<sequence>MLHNVSKGVVYSDTALKGQDGDREGMWVGAGGALAPNTSSLFPPEPPGASSNIIPVYCALLATVVLGLLAYVAFKCWRSRKQRQQLAKARTVELGDPDRDQRHGDSSVFVDSPHGLEPCIPSQGPHADLGCRLYLHIPQQQQEEVQRLLILGEPAKGWQGLAGQLGYQAEAVETMACDQDPAYALLRDWAAQEGSGATLRVLEDALTAIGREDVVQVLSSPAEGCSVV</sequence>
<keyword id="KW-0025">Alternative splicing</keyword>
<keyword id="KW-0053">Apoptosis</keyword>
<keyword id="KW-1003">Cell membrane</keyword>
<keyword id="KW-0325">Glycoprotein</keyword>
<keyword id="KW-0472">Membrane</keyword>
<keyword id="KW-0539">Nucleus</keyword>
<keyword id="KW-1185">Reference proteome</keyword>
<keyword id="KW-0812">Transmembrane</keyword>
<keyword id="KW-1133">Transmembrane helix</keyword>
<feature type="chain" id="PRO_0000415384" description="Death domain-containing membrane protein NRADD">
    <location>
        <begin position="1"/>
        <end position="228"/>
    </location>
</feature>
<feature type="topological domain" description="Extracellular" evidence="2">
    <location>
        <begin position="1"/>
        <end position="52"/>
    </location>
</feature>
<feature type="transmembrane region" description="Helical; Signal-anchor for type III membrane protein" evidence="2">
    <location>
        <begin position="53"/>
        <end position="73"/>
    </location>
</feature>
<feature type="topological domain" description="Cytoplasmic" evidence="2">
    <location>
        <begin position="74"/>
        <end position="228"/>
    </location>
</feature>
<feature type="domain" description="Death" evidence="3">
    <location>
        <begin position="143"/>
        <end position="222"/>
    </location>
</feature>
<feature type="glycosylation site" description="N-linked (GlcNAc...) asparagine" evidence="2">
    <location>
        <position position="4"/>
    </location>
</feature>
<feature type="glycosylation site" description="N-linked (GlcNAc...) asparagine" evidence="2">
    <location>
        <position position="37"/>
    </location>
</feature>
<feature type="splice variant" id="VSP_042237" description="In isoform 2." evidence="6">
    <location>
        <begin position="13"/>
        <end position="61"/>
    </location>
</feature>
<feature type="sequence conflict" description="In Ref. 1; AAM28824/AAM28825 and 2; AAN05632." evidence="7" ref="1 2">
    <original>Q</original>
    <variation>R</variation>
    <location>
        <position position="159"/>
    </location>
</feature>
<name>NRADD_RAT</name>
<comment type="function">
    <text evidence="1 4 5">Modulates NTRK1 signaling. Can activate several intracellular signaling pathways, leading to activation of JUN. Promotes translocation of SORT1 to the cell membrane, and thereby hinders lysosomal degradation of SOTR1 and promotes its interaction with NGFR (By similarity). Both isoform 1 and isoform 2 promote apoptosis.</text>
</comment>
<comment type="subunit">
    <text evidence="1 4 5">Interacts with NTRK1 (By similarity). Isoform 1 and isoform 2 interact with NGFR. Interacts with SORT1.</text>
</comment>
<comment type="subcellular location">
    <subcellularLocation>
        <location evidence="4">Cell membrane</location>
        <topology evidence="4">Single-pass type III membrane protein</topology>
    </subcellularLocation>
    <subcellularLocation>
        <location evidence="1">Nucleus</location>
    </subcellularLocation>
    <text evidence="1">Proteolytic processing gives rise to an intracellular domain that translocates to the nucleus.</text>
</comment>
<comment type="alternative products">
    <event type="alternative splicing"/>
    <isoform>
        <id>Q8K5A9-1</id>
        <name>1</name>
        <name>Long</name>
        <sequence type="displayed"/>
    </isoform>
    <isoform>
        <id>Q8K5A9-2</id>
        <name>2</name>
        <name>Short</name>
        <sequence type="described" ref="VSP_042237"/>
    </isoform>
</comment>
<comment type="tissue specificity">
    <text evidence="4">Detected in embryo, including embryonic brain. Detected at very low levels in adult testis, spleen, thymus and lung.</text>
</comment>
<comment type="developmental stage">
    <text evidence="4">Highly expressed in embryo. Expressed at very low levels in adult.</text>
</comment>
<comment type="PTM">
    <text>Isoform 1 is N-glycosylated. Isoform 2 is not N-glycosylated.</text>
</comment>
<reference key="1">
    <citation type="journal article" date="2002" name="NeuroMolecular Med.">
        <title>PLAIDD, a type II death domain protein that interacts with p75 neurotrophin receptor.</title>
        <authorList>
            <person name="Frankowski H."/>
            <person name="Castro-Obregon S."/>
            <person name="del Rio G."/>
            <person name="Rao R.V."/>
            <person name="Bredesen D.E."/>
        </authorList>
    </citation>
    <scope>NUCLEOTIDE SEQUENCE [MRNA] (ISOFORMS 1 AND 2)</scope>
    <scope>FUNCTION</scope>
    <scope>INTERACTION WITH NGFR</scope>
    <scope>SUBCELLULAR LOCATION</scope>
    <scope>DEVELOPMENTAL STAGE</scope>
    <scope>TISSUE SPECIFICITY</scope>
    <source>
        <strain>Sprague-Dawley</strain>
        <tissue>Embryonic brain</tissue>
    </source>
</reference>
<reference key="2">
    <citation type="journal article" date="2003" name="Cell Death Differ.">
        <title>NRADD, a novel membrane protein with a death domain involved in mediating apoptosis in response to ER stress.</title>
        <authorList>
            <person name="Wang X."/>
            <person name="Shao Z."/>
            <person name="Zetoune F.S."/>
            <person name="Zeidler M.G."/>
            <person name="Gowrishankar K."/>
            <person name="Vincenz C."/>
        </authorList>
    </citation>
    <scope>NUCLEOTIDE SEQUENCE [MRNA]</scope>
    <source>
        <strain>Sprague-Dawley</strain>
    </source>
</reference>
<reference key="3">
    <citation type="journal article" date="2004" name="Nature">
        <title>Genome sequence of the Brown Norway rat yields insights into mammalian evolution.</title>
        <authorList>
            <person name="Gibbs R.A."/>
            <person name="Weinstock G.M."/>
            <person name="Metzker M.L."/>
            <person name="Muzny D.M."/>
            <person name="Sodergren E.J."/>
            <person name="Scherer S."/>
            <person name="Scott G."/>
            <person name="Steffen D."/>
            <person name="Worley K.C."/>
            <person name="Burch P.E."/>
            <person name="Okwuonu G."/>
            <person name="Hines S."/>
            <person name="Lewis L."/>
            <person name="Deramo C."/>
            <person name="Delgado O."/>
            <person name="Dugan-Rocha S."/>
            <person name="Miner G."/>
            <person name="Morgan M."/>
            <person name="Hawes A."/>
            <person name="Gill R."/>
            <person name="Holt R.A."/>
            <person name="Adams M.D."/>
            <person name="Amanatides P.G."/>
            <person name="Baden-Tillson H."/>
            <person name="Barnstead M."/>
            <person name="Chin S."/>
            <person name="Evans C.A."/>
            <person name="Ferriera S."/>
            <person name="Fosler C."/>
            <person name="Glodek A."/>
            <person name="Gu Z."/>
            <person name="Jennings D."/>
            <person name="Kraft C.L."/>
            <person name="Nguyen T."/>
            <person name="Pfannkoch C.M."/>
            <person name="Sitter C."/>
            <person name="Sutton G.G."/>
            <person name="Venter J.C."/>
            <person name="Woodage T."/>
            <person name="Smith D."/>
            <person name="Lee H.-M."/>
            <person name="Gustafson E."/>
            <person name="Cahill P."/>
            <person name="Kana A."/>
            <person name="Doucette-Stamm L."/>
            <person name="Weinstock K."/>
            <person name="Fechtel K."/>
            <person name="Weiss R.B."/>
            <person name="Dunn D.M."/>
            <person name="Green E.D."/>
            <person name="Blakesley R.W."/>
            <person name="Bouffard G.G."/>
            <person name="De Jong P.J."/>
            <person name="Osoegawa K."/>
            <person name="Zhu B."/>
            <person name="Marra M."/>
            <person name="Schein J."/>
            <person name="Bosdet I."/>
            <person name="Fjell C."/>
            <person name="Jones S."/>
            <person name="Krzywinski M."/>
            <person name="Mathewson C."/>
            <person name="Siddiqui A."/>
            <person name="Wye N."/>
            <person name="McPherson J."/>
            <person name="Zhao S."/>
            <person name="Fraser C.M."/>
            <person name="Shetty J."/>
            <person name="Shatsman S."/>
            <person name="Geer K."/>
            <person name="Chen Y."/>
            <person name="Abramzon S."/>
            <person name="Nierman W.C."/>
            <person name="Havlak P.H."/>
            <person name="Chen R."/>
            <person name="Durbin K.J."/>
            <person name="Egan A."/>
            <person name="Ren Y."/>
            <person name="Song X.-Z."/>
            <person name="Li B."/>
            <person name="Liu Y."/>
            <person name="Qin X."/>
            <person name="Cawley S."/>
            <person name="Cooney A.J."/>
            <person name="D'Souza L.M."/>
            <person name="Martin K."/>
            <person name="Wu J.Q."/>
            <person name="Gonzalez-Garay M.L."/>
            <person name="Jackson A.R."/>
            <person name="Kalafus K.J."/>
            <person name="McLeod M.P."/>
            <person name="Milosavljevic A."/>
            <person name="Virk D."/>
            <person name="Volkov A."/>
            <person name="Wheeler D.A."/>
            <person name="Zhang Z."/>
            <person name="Bailey J.A."/>
            <person name="Eichler E.E."/>
            <person name="Tuzun E."/>
            <person name="Birney E."/>
            <person name="Mongin E."/>
            <person name="Ureta-Vidal A."/>
            <person name="Woodwark C."/>
            <person name="Zdobnov E."/>
            <person name="Bork P."/>
            <person name="Suyama M."/>
            <person name="Torrents D."/>
            <person name="Alexandersson M."/>
            <person name="Trask B.J."/>
            <person name="Young J.M."/>
            <person name="Huang H."/>
            <person name="Wang H."/>
            <person name="Xing H."/>
            <person name="Daniels S."/>
            <person name="Gietzen D."/>
            <person name="Schmidt J."/>
            <person name="Stevens K."/>
            <person name="Vitt U."/>
            <person name="Wingrove J."/>
            <person name="Camara F."/>
            <person name="Mar Alba M."/>
            <person name="Abril J.F."/>
            <person name="Guigo R."/>
            <person name="Smit A."/>
            <person name="Dubchak I."/>
            <person name="Rubin E.M."/>
            <person name="Couronne O."/>
            <person name="Poliakov A."/>
            <person name="Huebner N."/>
            <person name="Ganten D."/>
            <person name="Goesele C."/>
            <person name="Hummel O."/>
            <person name="Kreitler T."/>
            <person name="Lee Y.-A."/>
            <person name="Monti J."/>
            <person name="Schulz H."/>
            <person name="Zimdahl H."/>
            <person name="Himmelbauer H."/>
            <person name="Lehrach H."/>
            <person name="Jacob H.J."/>
            <person name="Bromberg S."/>
            <person name="Gullings-Handley J."/>
            <person name="Jensen-Seaman M.I."/>
            <person name="Kwitek A.E."/>
            <person name="Lazar J."/>
            <person name="Pasko D."/>
            <person name="Tonellato P.J."/>
            <person name="Twigger S."/>
            <person name="Ponting C.P."/>
            <person name="Duarte J.M."/>
            <person name="Rice S."/>
            <person name="Goodstadt L."/>
            <person name="Beatson S.A."/>
            <person name="Emes R.D."/>
            <person name="Winter E.E."/>
            <person name="Webber C."/>
            <person name="Brandt P."/>
            <person name="Nyakatura G."/>
            <person name="Adetobi M."/>
            <person name="Chiaromonte F."/>
            <person name="Elnitski L."/>
            <person name="Eswara P."/>
            <person name="Hardison R.C."/>
            <person name="Hou M."/>
            <person name="Kolbe D."/>
            <person name="Makova K."/>
            <person name="Miller W."/>
            <person name="Nekrutenko A."/>
            <person name="Riemer C."/>
            <person name="Schwartz S."/>
            <person name="Taylor J."/>
            <person name="Yang S."/>
            <person name="Zhang Y."/>
            <person name="Lindpaintner K."/>
            <person name="Andrews T.D."/>
            <person name="Caccamo M."/>
            <person name="Clamp M."/>
            <person name="Clarke L."/>
            <person name="Curwen V."/>
            <person name="Durbin R.M."/>
            <person name="Eyras E."/>
            <person name="Searle S.M."/>
            <person name="Cooper G.M."/>
            <person name="Batzoglou S."/>
            <person name="Brudno M."/>
            <person name="Sidow A."/>
            <person name="Stone E.A."/>
            <person name="Payseur B.A."/>
            <person name="Bourque G."/>
            <person name="Lopez-Otin C."/>
            <person name="Puente X.S."/>
            <person name="Chakrabarti K."/>
            <person name="Chatterji S."/>
            <person name="Dewey C."/>
            <person name="Pachter L."/>
            <person name="Bray N."/>
            <person name="Yap V.B."/>
            <person name="Caspi A."/>
            <person name="Tesler G."/>
            <person name="Pevzner P.A."/>
            <person name="Haussler D."/>
            <person name="Roskin K.M."/>
            <person name="Baertsch R."/>
            <person name="Clawson H."/>
            <person name="Furey T.S."/>
            <person name="Hinrichs A.S."/>
            <person name="Karolchik D."/>
            <person name="Kent W.J."/>
            <person name="Rosenbloom K.R."/>
            <person name="Trumbower H."/>
            <person name="Weirauch M."/>
            <person name="Cooper D.N."/>
            <person name="Stenson P.D."/>
            <person name="Ma B."/>
            <person name="Brent M."/>
            <person name="Arumugam M."/>
            <person name="Shteynberg D."/>
            <person name="Copley R.R."/>
            <person name="Taylor M.S."/>
            <person name="Riethman H."/>
            <person name="Mudunuri U."/>
            <person name="Peterson J."/>
            <person name="Guyer M."/>
            <person name="Felsenfeld A."/>
            <person name="Old S."/>
            <person name="Mockrin S."/>
            <person name="Collins F.S."/>
        </authorList>
    </citation>
    <scope>NUCLEOTIDE SEQUENCE [LARGE SCALE GENOMIC DNA]</scope>
    <source>
        <strain>Brown Norway</strain>
    </source>
</reference>
<reference key="4">
    <citation type="submission" date="2005-09" db="EMBL/GenBank/DDBJ databases">
        <authorList>
            <person name="Mural R.J."/>
            <person name="Adams M.D."/>
            <person name="Myers E.W."/>
            <person name="Smith H.O."/>
            <person name="Venter J.C."/>
        </authorList>
    </citation>
    <scope>NUCLEOTIDE SEQUENCE [LARGE SCALE GENOMIC DNA]</scope>
    <source>
        <strain>Brown Norway</strain>
    </source>
</reference>
<reference key="5">
    <citation type="journal article" date="2009" name="EMBO J.">
        <title>NRH2 is a trafficking switch to regulate sortilin localization and permit proneurotrophin-induced cell death.</title>
        <authorList>
            <person name="Kim T."/>
            <person name="Hempstead B.L."/>
        </authorList>
    </citation>
    <scope>FUNCTION</scope>
    <scope>INTERACTION WITH NGFR AND SORT1</scope>
</reference>
<gene>
    <name type="primary">Nradd</name>
    <name type="synonym">Nrh2</name>
    <name type="synonym">Plaidd</name>
</gene>
<evidence type="ECO:0000250" key="1"/>
<evidence type="ECO:0000255" key="2"/>
<evidence type="ECO:0000255" key="3">
    <source>
        <dbReference type="PROSITE-ProRule" id="PRU00064"/>
    </source>
</evidence>
<evidence type="ECO:0000269" key="4">
    <source>
    </source>
</evidence>
<evidence type="ECO:0000269" key="5">
    <source>
    </source>
</evidence>
<evidence type="ECO:0000303" key="6">
    <source>
    </source>
</evidence>
<evidence type="ECO:0000305" key="7"/>